<keyword id="KW-0007">Acetylation</keyword>
<keyword id="KW-0249">Electron transport</keyword>
<keyword id="KW-0472">Membrane</keyword>
<keyword id="KW-0496">Mitochondrion</keyword>
<keyword id="KW-0999">Mitochondrion inner membrane</keyword>
<keyword id="KW-0597">Phosphoprotein</keyword>
<keyword id="KW-1185">Reference proteome</keyword>
<keyword id="KW-0679">Respiratory chain</keyword>
<keyword id="KW-0812">Transmembrane</keyword>
<keyword id="KW-1133">Transmembrane helix</keyword>
<keyword id="KW-0813">Transport</keyword>
<sequence>MSFPKYKPSSLRTLPETLDPAEYNISPETRRAQAERLAIRAQLKREYLLQYNDPNRRGLIENPALLRWAYARTINVYPNFRPTPKNSLMGALCGFGPLIFIYYIIKTERDRKEKLIQEGKLDRTFHLSY</sequence>
<name>NDUB4_GORGO</name>
<proteinExistence type="evidence at transcript level"/>
<dbReference type="EMBL" id="DQ885700">
    <property type="protein sequence ID" value="ABH12209.1"/>
    <property type="molecule type" value="mRNA"/>
</dbReference>
<dbReference type="RefSeq" id="NP_001266482.1">
    <property type="nucleotide sequence ID" value="NM_001279553.1"/>
</dbReference>
<dbReference type="SMR" id="Q0MQD4"/>
<dbReference type="FunCoup" id="Q0MQD4">
    <property type="interactions" value="958"/>
</dbReference>
<dbReference type="STRING" id="9593.ENSGGOP00000013576"/>
<dbReference type="Ensembl" id="ENSGGOT00000013967.3">
    <property type="protein sequence ID" value="ENSGGOP00000013576.3"/>
    <property type="gene ID" value="ENSGGOG00000013923.3"/>
</dbReference>
<dbReference type="GeneID" id="101129506"/>
<dbReference type="KEGG" id="ggo:101129506"/>
<dbReference type="CTD" id="4710"/>
<dbReference type="eggNOG" id="ENOG502S2HF">
    <property type="taxonomic scope" value="Eukaryota"/>
</dbReference>
<dbReference type="GeneTree" id="ENSGT00390000007133"/>
<dbReference type="HOGENOM" id="CLU_123402_0_0_1"/>
<dbReference type="InParanoid" id="Q0MQD4"/>
<dbReference type="OMA" id="REYLLHY"/>
<dbReference type="OrthoDB" id="4085at9604"/>
<dbReference type="Proteomes" id="UP000001519">
    <property type="component" value="Chromosome 3"/>
</dbReference>
<dbReference type="Bgee" id="ENSGGOG00000013923">
    <property type="expression patterns" value="Expressed in heart and 6 other cell types or tissues"/>
</dbReference>
<dbReference type="GO" id="GO:0005743">
    <property type="term" value="C:mitochondrial inner membrane"/>
    <property type="evidence" value="ECO:0007669"/>
    <property type="project" value="UniProtKB-SubCell"/>
</dbReference>
<dbReference type="GO" id="GO:0005654">
    <property type="term" value="C:nucleoplasm"/>
    <property type="evidence" value="ECO:0007669"/>
    <property type="project" value="Ensembl"/>
</dbReference>
<dbReference type="GO" id="GO:0045271">
    <property type="term" value="C:respiratory chain complex I"/>
    <property type="evidence" value="ECO:0000250"/>
    <property type="project" value="UniProtKB"/>
</dbReference>
<dbReference type="InterPro" id="IPR009866">
    <property type="entry name" value="NADH_UbQ_OxRdtase_NDUFB4_su"/>
</dbReference>
<dbReference type="PANTHER" id="PTHR15469:SF1">
    <property type="entry name" value="NADH DEHYDROGENASE [UBIQUINONE] 1 BETA SUBCOMPLEX SUBUNIT 4"/>
    <property type="match status" value="1"/>
</dbReference>
<dbReference type="PANTHER" id="PTHR15469">
    <property type="entry name" value="NADH-UBIQUINONE OXIDOREDUCTASE B15 SUBUNIT"/>
    <property type="match status" value="1"/>
</dbReference>
<dbReference type="Pfam" id="PF07225">
    <property type="entry name" value="NDUF_B4"/>
    <property type="match status" value="1"/>
</dbReference>
<organism>
    <name type="scientific">Gorilla gorilla gorilla</name>
    <name type="common">Western lowland gorilla</name>
    <dbReference type="NCBI Taxonomy" id="9595"/>
    <lineage>
        <taxon>Eukaryota</taxon>
        <taxon>Metazoa</taxon>
        <taxon>Chordata</taxon>
        <taxon>Craniata</taxon>
        <taxon>Vertebrata</taxon>
        <taxon>Euteleostomi</taxon>
        <taxon>Mammalia</taxon>
        <taxon>Eutheria</taxon>
        <taxon>Euarchontoglires</taxon>
        <taxon>Primates</taxon>
        <taxon>Haplorrhini</taxon>
        <taxon>Catarrhini</taxon>
        <taxon>Hominidae</taxon>
        <taxon>Gorilla</taxon>
    </lineage>
</organism>
<protein>
    <recommendedName>
        <fullName>NADH dehydrogenase [ubiquinone] 1 beta subcomplex subunit 4</fullName>
    </recommendedName>
    <alternativeName>
        <fullName>Complex I-B15</fullName>
        <shortName>CI-B15</shortName>
    </alternativeName>
    <alternativeName>
        <fullName>NADH-ubiquinone oxidoreductase B15 subunit</fullName>
    </alternativeName>
</protein>
<comment type="function">
    <text evidence="1">Accessory subunit of the mitochondrial membrane respiratory chain NADH dehydrogenase (Complex I), that is believed not to be involved in catalysis. Complex I functions in the transfer of electrons from NADH to the respiratory chain. The immediate electron acceptor for the enzyme is believed to be ubiquinone.</text>
</comment>
<comment type="subunit">
    <text evidence="1">Complex I is composed of 45 different subunits.</text>
</comment>
<comment type="subcellular location">
    <subcellularLocation>
        <location evidence="1">Mitochondrion inner membrane</location>
        <topology evidence="3">Single-pass membrane protein</topology>
        <orientation evidence="1">Matrix side</orientation>
    </subcellularLocation>
</comment>
<comment type="similarity">
    <text evidence="4">Belongs to the complex I NDUFB4 subunit family.</text>
</comment>
<feature type="initiator methionine" description="Removed" evidence="2">
    <location>
        <position position="1"/>
    </location>
</feature>
<feature type="chain" id="PRO_0000251831" description="NADH dehydrogenase [ubiquinone] 1 beta subcomplex subunit 4">
    <location>
        <begin position="2"/>
        <end position="129"/>
    </location>
</feature>
<feature type="transmembrane region" description="Helical" evidence="3">
    <location>
        <begin position="88"/>
        <end position="105"/>
    </location>
</feature>
<feature type="modified residue" description="N-acetylserine" evidence="2">
    <location>
        <position position="2"/>
    </location>
</feature>
<feature type="modified residue" description="Phosphoserine" evidence="1">
    <location>
        <position position="26"/>
    </location>
</feature>
<reference key="1">
    <citation type="journal article" date="2006" name="Gene">
        <title>Adaptive selection of mitochondrial complex I subunits during primate radiation.</title>
        <authorList>
            <person name="Mishmar D."/>
            <person name="Ruiz-Pesini E."/>
            <person name="Mondragon-Palomino M."/>
            <person name="Procaccio V."/>
            <person name="Gaut B."/>
            <person name="Wallace D.C."/>
        </authorList>
    </citation>
    <scope>NUCLEOTIDE SEQUENCE [MRNA]</scope>
</reference>
<evidence type="ECO:0000250" key="1">
    <source>
        <dbReference type="UniProtKB" id="O95168"/>
    </source>
</evidence>
<evidence type="ECO:0000250" key="2">
    <source>
        <dbReference type="UniProtKB" id="P48305"/>
    </source>
</evidence>
<evidence type="ECO:0000255" key="3"/>
<evidence type="ECO:0000305" key="4"/>
<accession>Q0MQD4</accession>
<gene>
    <name type="primary">NDUFB4</name>
</gene>